<proteinExistence type="inferred from homology"/>
<sequence>MRMESLADRLDACQEKLLDLYEKDSNKLEDQILHWHYVRLENAMLFKARQAGLTRVGHQMVPTLSVTKGKAHKAIEVHLSLQGLQTSAYAHEPWTLQTTSLEMWNTQPQRCWKKKGRRLTVKFDGEDHKAVEYVSWGYIYVQSTETDLWYKVPGKVSYKGLYYEMEGQEHYYVTFAQEAQKYGETGKWEVHMGNTVIYEPCASVSSTQDAVREVSTAETAGHLRDNTTQTTTTPTCVGPTQTSTSVQTPPHKRQRLHRDREQQPDTTQKDNHKRVDSTDQWINGHRNSTETGDNCDSYSSPVIHLKGDPNKLKCFRYRLQHSVPELFDKASSTWHWAGGQSTTRAAFVTLWYVNVEQRKQFLNRVTIPKGIQATAGYMSMCI</sequence>
<organism>
    <name type="scientific">Human papillomavirus type 61</name>
    <dbReference type="NCBI Taxonomy" id="37116"/>
    <lineage>
        <taxon>Viruses</taxon>
        <taxon>Monodnaviria</taxon>
        <taxon>Shotokuvirae</taxon>
        <taxon>Cossaviricota</taxon>
        <taxon>Papovaviricetes</taxon>
        <taxon>Zurhausenvirales</taxon>
        <taxon>Papillomaviridae</taxon>
        <taxon>Firstpapillomavirinae</taxon>
        <taxon>Alphapapillomavirus</taxon>
        <taxon>Alphapapillomavirus 3</taxon>
    </lineage>
</organism>
<accession>Q80951</accession>
<organismHost>
    <name type="scientific">Homo sapiens</name>
    <name type="common">Human</name>
    <dbReference type="NCBI Taxonomy" id="9606"/>
</organismHost>
<evidence type="ECO:0000255" key="1">
    <source>
        <dbReference type="HAMAP-Rule" id="MF_04001"/>
    </source>
</evidence>
<evidence type="ECO:0000256" key="2">
    <source>
        <dbReference type="SAM" id="MobiDB-lite"/>
    </source>
</evidence>
<gene>
    <name evidence="1" type="primary">E2</name>
</gene>
<reference key="1">
    <citation type="submission" date="1995-10" db="EMBL/GenBank/DDBJ databases">
        <authorList>
            <person name="Delius H."/>
        </authorList>
    </citation>
    <scope>NUCLEOTIDE SEQUENCE [GENOMIC DNA]</scope>
</reference>
<name>VE2_HPV61</name>
<comment type="function">
    <text evidence="1">Plays a role in the initiation of viral DNA replication. A dimer of E2 interacts with a dimer of E1 in order to improve specificity of E1 DNA binding activity. Once the complex recognizes and binds DNA at specific sites, the E2 dimer is removed from DNA. E2 also regulates viral transcription through binding to the E2RE response element (5'-ACCNNNNNNGGT-3') present in multiple copies in the regulatory regions of the viral genome. Activates or represses transcription depending on E2RE's position with regards to proximal promoter elements including the TATA-box. Repression occurs by sterically hindering the assembly of the transcription initiation complex.</text>
</comment>
<comment type="subunit">
    <text evidence="1">Binds DNA as homodimer. Interacts with protein E1; this interaction greatly increases E1 DNA-binding activity. Interacts with protein L1; this interaction enhances E2-dependent replication and transcription activation. Interacts with protein L2; this interaction inhibits E2 transcriptional activity but not DNA replication function E2. Interacts with protein E7; this interaction inhibits E7 oncogenic activity. Interacts with host TAF1; this interaction modulates E2-dependent transcriptional regulation. Interacts with host BRD4; this interaction mediates E2 transcriptional activation function. Additionally, the interaction with host BRD4 on mitotic chromosomes mediates tethering of the viral genome. Interacts with host TOPBP1; this interaction is required for optimal viral DNA replication.</text>
</comment>
<comment type="subcellular location">
    <subcellularLocation>
        <location evidence="1">Host nucleus</location>
    </subcellularLocation>
</comment>
<comment type="PTM">
    <text evidence="1">Phosphorylated.</text>
</comment>
<comment type="PTM">
    <text evidence="1">Sumoylation plays a regulatory role in E2 transcriptional activity.</text>
</comment>
<comment type="similarity">
    <text evidence="1">Belongs to the papillomaviridae E2 protein family.</text>
</comment>
<protein>
    <recommendedName>
        <fullName evidence="1">Regulatory protein E2</fullName>
    </recommendedName>
</protein>
<keyword id="KW-0010">Activator</keyword>
<keyword id="KW-0235">DNA replication</keyword>
<keyword id="KW-0238">DNA-binding</keyword>
<keyword id="KW-0244">Early protein</keyword>
<keyword id="KW-1048">Host nucleus</keyword>
<keyword id="KW-1017">Isopeptide bond</keyword>
<keyword id="KW-0597">Phosphoprotein</keyword>
<keyword id="KW-1185">Reference proteome</keyword>
<keyword id="KW-0678">Repressor</keyword>
<keyword id="KW-0804">Transcription</keyword>
<keyword id="KW-0805">Transcription regulation</keyword>
<keyword id="KW-0832">Ubl conjugation</keyword>
<feature type="chain" id="PRO_0000133238" description="Regulatory protein E2">
    <location>
        <begin position="1"/>
        <end position="382"/>
    </location>
</feature>
<feature type="region of interest" description="Transactivation domain" evidence="1">
    <location>
        <begin position="1"/>
        <end position="204"/>
    </location>
</feature>
<feature type="region of interest" description="Disordered" evidence="2">
    <location>
        <begin position="213"/>
        <end position="294"/>
    </location>
</feature>
<feature type="region of interest" description="DNA-binding domain" evidence="1">
    <location>
        <begin position="299"/>
        <end position="382"/>
    </location>
</feature>
<feature type="compositionally biased region" description="Low complexity" evidence="2">
    <location>
        <begin position="227"/>
        <end position="249"/>
    </location>
</feature>
<feature type="compositionally biased region" description="Basic and acidic residues" evidence="2">
    <location>
        <begin position="258"/>
        <end position="277"/>
    </location>
</feature>
<feature type="compositionally biased region" description="Polar residues" evidence="2">
    <location>
        <begin position="278"/>
        <end position="294"/>
    </location>
</feature>
<feature type="cross-link" description="Glycyl lysine isopeptide (Lys-Gly) (interchain with G-Cter in SUMO)" evidence="1">
    <location>
        <position position="306"/>
    </location>
</feature>
<dbReference type="EMBL" id="U31793">
    <property type="protein sequence ID" value="AAA79495.1"/>
    <property type="molecule type" value="Genomic_DNA"/>
</dbReference>
<dbReference type="RefSeq" id="NP_043447.1">
    <property type="nucleotide sequence ID" value="NC_001694.1"/>
</dbReference>
<dbReference type="SMR" id="Q80951"/>
<dbReference type="GeneID" id="1403315"/>
<dbReference type="KEGG" id="vg:1403315"/>
<dbReference type="Proteomes" id="UP000007670">
    <property type="component" value="Genome"/>
</dbReference>
<dbReference type="GO" id="GO:0042025">
    <property type="term" value="C:host cell nucleus"/>
    <property type="evidence" value="ECO:0007669"/>
    <property type="project" value="UniProtKB-SubCell"/>
</dbReference>
<dbReference type="GO" id="GO:0003677">
    <property type="term" value="F:DNA binding"/>
    <property type="evidence" value="ECO:0007669"/>
    <property type="project" value="UniProtKB-UniRule"/>
</dbReference>
<dbReference type="GO" id="GO:0003700">
    <property type="term" value="F:DNA-binding transcription factor activity"/>
    <property type="evidence" value="ECO:0007669"/>
    <property type="project" value="UniProtKB-UniRule"/>
</dbReference>
<dbReference type="GO" id="GO:0000166">
    <property type="term" value="F:nucleotide binding"/>
    <property type="evidence" value="ECO:0007669"/>
    <property type="project" value="UniProtKB-UniRule"/>
</dbReference>
<dbReference type="GO" id="GO:0006260">
    <property type="term" value="P:DNA replication"/>
    <property type="evidence" value="ECO:0007669"/>
    <property type="project" value="UniProtKB-KW"/>
</dbReference>
<dbReference type="GO" id="GO:0006351">
    <property type="term" value="P:DNA-templated transcription"/>
    <property type="evidence" value="ECO:0007669"/>
    <property type="project" value="UniProtKB-UniRule"/>
</dbReference>
<dbReference type="GO" id="GO:0006275">
    <property type="term" value="P:regulation of DNA replication"/>
    <property type="evidence" value="ECO:0007669"/>
    <property type="project" value="UniProtKB-UniRule"/>
</dbReference>
<dbReference type="GO" id="GO:0039693">
    <property type="term" value="P:viral DNA genome replication"/>
    <property type="evidence" value="ECO:0007669"/>
    <property type="project" value="UniProtKB-UniRule"/>
</dbReference>
<dbReference type="Gene3D" id="3.30.70.330">
    <property type="match status" value="1"/>
</dbReference>
<dbReference type="Gene3D" id="1.10.287.30">
    <property type="entry name" value="E2 (early) protein, N terminal domain, subdomain 1"/>
    <property type="match status" value="1"/>
</dbReference>
<dbReference type="Gene3D" id="2.170.200.10">
    <property type="entry name" value="Papillomavirus E2 early protein domain"/>
    <property type="match status" value="1"/>
</dbReference>
<dbReference type="HAMAP" id="MF_04001">
    <property type="entry name" value="PPV_E2"/>
    <property type="match status" value="1"/>
</dbReference>
<dbReference type="InterPro" id="IPR035975">
    <property type="entry name" value="E2/EBNA1_C_sf"/>
</dbReference>
<dbReference type="InterPro" id="IPR012677">
    <property type="entry name" value="Nucleotide-bd_a/b_plait_sf"/>
</dbReference>
<dbReference type="InterPro" id="IPR000427">
    <property type="entry name" value="Papillomavirus_E2_C"/>
</dbReference>
<dbReference type="InterPro" id="IPR001866">
    <property type="entry name" value="PPV_E2_N"/>
</dbReference>
<dbReference type="InterPro" id="IPR033668">
    <property type="entry name" value="Reg_prot_E2"/>
</dbReference>
<dbReference type="InterPro" id="IPR036050">
    <property type="entry name" value="Regulatory_protein_E2_N"/>
</dbReference>
<dbReference type="InterPro" id="IPR042503">
    <property type="entry name" value="Regulatory_protein_E2_N_1"/>
</dbReference>
<dbReference type="InterPro" id="IPR042504">
    <property type="entry name" value="Regulatory_protein_E2_N_2"/>
</dbReference>
<dbReference type="Pfam" id="PF00511">
    <property type="entry name" value="PPV_E2_C"/>
    <property type="match status" value="1"/>
</dbReference>
<dbReference type="Pfam" id="PF00508">
    <property type="entry name" value="PPV_E2_N"/>
    <property type="match status" value="1"/>
</dbReference>
<dbReference type="SUPFAM" id="SSF51332">
    <property type="entry name" value="E2 regulatory, transactivation domain"/>
    <property type="match status" value="1"/>
</dbReference>
<dbReference type="SUPFAM" id="SSF54957">
    <property type="entry name" value="Viral DNA-binding domain"/>
    <property type="match status" value="1"/>
</dbReference>